<gene>
    <name evidence="1" type="primary">ubiB</name>
    <name type="ordered locus">YPDSF_3396</name>
</gene>
<organism>
    <name type="scientific">Yersinia pestis (strain Pestoides F)</name>
    <dbReference type="NCBI Taxonomy" id="386656"/>
    <lineage>
        <taxon>Bacteria</taxon>
        <taxon>Pseudomonadati</taxon>
        <taxon>Pseudomonadota</taxon>
        <taxon>Gammaproteobacteria</taxon>
        <taxon>Enterobacterales</taxon>
        <taxon>Yersiniaceae</taxon>
        <taxon>Yersinia</taxon>
    </lineage>
</organism>
<comment type="function">
    <text evidence="1">Is probably a protein kinase regulator of UbiI activity which is involved in aerobic coenzyme Q (ubiquinone) biosynthesis.</text>
</comment>
<comment type="pathway">
    <text>Cofactor biosynthesis; ubiquinone biosynthesis [regulation].</text>
</comment>
<comment type="subcellular location">
    <subcellularLocation>
        <location evidence="1">Cell inner membrane</location>
        <topology evidence="1">Single-pass membrane protein</topology>
    </subcellularLocation>
</comment>
<comment type="similarity">
    <text evidence="1">Belongs to the ABC1 family. UbiB subfamily.</text>
</comment>
<dbReference type="EC" id="2.7.-.-" evidence="1"/>
<dbReference type="EMBL" id="CP000668">
    <property type="protein sequence ID" value="ABP41749.1"/>
    <property type="molecule type" value="Genomic_DNA"/>
</dbReference>
<dbReference type="RefSeq" id="WP_002211535.1">
    <property type="nucleotide sequence ID" value="NZ_CP009715.1"/>
</dbReference>
<dbReference type="SMR" id="A4TR37"/>
<dbReference type="GeneID" id="57974929"/>
<dbReference type="KEGG" id="ypp:YPDSF_3396"/>
<dbReference type="PATRIC" id="fig|386656.14.peg.932"/>
<dbReference type="UniPathway" id="UPA00232"/>
<dbReference type="GO" id="GO:0005886">
    <property type="term" value="C:plasma membrane"/>
    <property type="evidence" value="ECO:0007669"/>
    <property type="project" value="UniProtKB-SubCell"/>
</dbReference>
<dbReference type="GO" id="GO:0005524">
    <property type="term" value="F:ATP binding"/>
    <property type="evidence" value="ECO:0007669"/>
    <property type="project" value="UniProtKB-KW"/>
</dbReference>
<dbReference type="GO" id="GO:0004672">
    <property type="term" value="F:protein kinase activity"/>
    <property type="evidence" value="ECO:0007669"/>
    <property type="project" value="UniProtKB-UniRule"/>
</dbReference>
<dbReference type="GO" id="GO:0010795">
    <property type="term" value="P:regulation of ubiquinone biosynthetic process"/>
    <property type="evidence" value="ECO:0007669"/>
    <property type="project" value="UniProtKB-UniRule"/>
</dbReference>
<dbReference type="GO" id="GO:0006744">
    <property type="term" value="P:ubiquinone biosynthetic process"/>
    <property type="evidence" value="ECO:0007669"/>
    <property type="project" value="UniProtKB-UniPathway"/>
</dbReference>
<dbReference type="CDD" id="cd13972">
    <property type="entry name" value="UbiB"/>
    <property type="match status" value="1"/>
</dbReference>
<dbReference type="HAMAP" id="MF_00414">
    <property type="entry name" value="UbiB"/>
    <property type="match status" value="1"/>
</dbReference>
<dbReference type="InterPro" id="IPR004147">
    <property type="entry name" value="ABC1_dom"/>
</dbReference>
<dbReference type="InterPro" id="IPR011009">
    <property type="entry name" value="Kinase-like_dom_sf"/>
</dbReference>
<dbReference type="InterPro" id="IPR010232">
    <property type="entry name" value="UbiB"/>
</dbReference>
<dbReference type="InterPro" id="IPR045308">
    <property type="entry name" value="UbiB_bact"/>
</dbReference>
<dbReference type="InterPro" id="IPR050154">
    <property type="entry name" value="UbiB_kinase"/>
</dbReference>
<dbReference type="NCBIfam" id="NF003404">
    <property type="entry name" value="PRK04750.1"/>
    <property type="match status" value="1"/>
</dbReference>
<dbReference type="NCBIfam" id="TIGR01982">
    <property type="entry name" value="UbiB"/>
    <property type="match status" value="1"/>
</dbReference>
<dbReference type="PANTHER" id="PTHR10566">
    <property type="entry name" value="CHAPERONE-ACTIVITY OF BC1 COMPLEX CABC1 -RELATED"/>
    <property type="match status" value="1"/>
</dbReference>
<dbReference type="PANTHER" id="PTHR10566:SF113">
    <property type="entry name" value="PROTEIN ACTIVITY OF BC1 COMPLEX KINASE 7, CHLOROPLASTIC"/>
    <property type="match status" value="1"/>
</dbReference>
<dbReference type="Pfam" id="PF03109">
    <property type="entry name" value="ABC1"/>
    <property type="match status" value="1"/>
</dbReference>
<dbReference type="SUPFAM" id="SSF56112">
    <property type="entry name" value="Protein kinase-like (PK-like)"/>
    <property type="match status" value="1"/>
</dbReference>
<proteinExistence type="inferred from homology"/>
<evidence type="ECO:0000255" key="1">
    <source>
        <dbReference type="HAMAP-Rule" id="MF_00414"/>
    </source>
</evidence>
<protein>
    <recommendedName>
        <fullName evidence="1">Probable protein kinase UbiB</fullName>
        <ecNumber evidence="1">2.7.-.-</ecNumber>
    </recommendedName>
    <alternativeName>
        <fullName evidence="1">Ubiquinone biosynthesis protein UbiB</fullName>
    </alternativeName>
</protein>
<accession>A4TR37</accession>
<reference key="1">
    <citation type="submission" date="2007-02" db="EMBL/GenBank/DDBJ databases">
        <title>Complete sequence of chromosome of Yersinia pestis Pestoides F.</title>
        <authorList>
            <consortium name="US DOE Joint Genome Institute"/>
            <person name="Copeland A."/>
            <person name="Lucas S."/>
            <person name="Lapidus A."/>
            <person name="Barry K."/>
            <person name="Detter J.C."/>
            <person name="Glavina del Rio T."/>
            <person name="Hammon N."/>
            <person name="Israni S."/>
            <person name="Dalin E."/>
            <person name="Tice H."/>
            <person name="Pitluck S."/>
            <person name="Di Bartolo G."/>
            <person name="Chain P."/>
            <person name="Malfatti S."/>
            <person name="Shin M."/>
            <person name="Vergez L."/>
            <person name="Schmutz J."/>
            <person name="Larimer F."/>
            <person name="Land M."/>
            <person name="Hauser L."/>
            <person name="Worsham P."/>
            <person name="Chu M."/>
            <person name="Bearden S."/>
            <person name="Garcia E."/>
            <person name="Richardson P."/>
        </authorList>
    </citation>
    <scope>NUCLEOTIDE SEQUENCE [LARGE SCALE GENOMIC DNA]</scope>
    <source>
        <strain>Pestoides F</strain>
    </source>
</reference>
<sequence length="543" mass="62427">MTPGELRRLYLIIRVFLSYGLDELIPNIRLTLPLRVGRHLFFWLSNRHKDKSLGERLRLALQELGPVWIKFGQMMSTRRDLFPPNIADQLALLQDRVASFDGALARKHIEIAMGGALETWFDDFDSQALASASIAQVHTARLKENGKEVVLKVIRPDILPIIKADVRLMYRLAGWVPKLLPDGRRLRPREVVREYEKTLLDELNLLREAANAIQLRRNFEDSPMLYIPEVYSDYCRESVLVMERIYGIPVSDIAALEDQGTNMKLLAERGVQVFFTQVFRDSFFHADMHPGNIFVSYEHPHDPLYIGIDCGIVGSLNKADKRYLAENFIAFFNRDYRRVAELHVDSGWVPRDTNVEDFEFAIRTVCEPIFEKPLAEISFGHVLLNLFNTARRFNMEVQPQLVLLQKTLLYVEGLGRQLYPQLDLWTTAKPFLESWLRDQVGLPAVIRALKEKAPFWAEKFPELPELVYDSLQQHKLLQQSVEKLTIQIQGQQQRQGQSRYLFGVGATLLVSGTILFLADATEVSTGFIVAGALAWFIGWRRTC</sequence>
<feature type="chain" id="PRO_1000050078" description="Probable protein kinase UbiB">
    <location>
        <begin position="1"/>
        <end position="543"/>
    </location>
</feature>
<feature type="transmembrane region" description="Helical" evidence="1">
    <location>
        <begin position="517"/>
        <end position="539"/>
    </location>
</feature>
<feature type="domain" description="Protein kinase" evidence="1">
    <location>
        <begin position="123"/>
        <end position="501"/>
    </location>
</feature>
<feature type="active site" description="Proton acceptor" evidence="1">
    <location>
        <position position="287"/>
    </location>
</feature>
<feature type="binding site" evidence="1">
    <location>
        <begin position="129"/>
        <end position="137"/>
    </location>
    <ligand>
        <name>ATP</name>
        <dbReference type="ChEBI" id="CHEBI:30616"/>
    </ligand>
</feature>
<feature type="binding site" evidence="1">
    <location>
        <position position="152"/>
    </location>
    <ligand>
        <name>ATP</name>
        <dbReference type="ChEBI" id="CHEBI:30616"/>
    </ligand>
</feature>
<name>UBIB_YERPP</name>
<keyword id="KW-0067">ATP-binding</keyword>
<keyword id="KW-0997">Cell inner membrane</keyword>
<keyword id="KW-1003">Cell membrane</keyword>
<keyword id="KW-0418">Kinase</keyword>
<keyword id="KW-0472">Membrane</keyword>
<keyword id="KW-0547">Nucleotide-binding</keyword>
<keyword id="KW-0808">Transferase</keyword>
<keyword id="KW-0812">Transmembrane</keyword>
<keyword id="KW-1133">Transmembrane helix</keyword>
<keyword id="KW-0831">Ubiquinone biosynthesis</keyword>